<comment type="catalytic activity">
    <reaction>
        <text>Hydrolysis of (1-&gt;4)-beta-linkages between N-acetylmuramic acid and N-acetyl-D-glucosamine residues in a peptidoglycan and between N-acetyl-D-glucosamine residues in chitodextrins.</text>
        <dbReference type="EC" id="3.2.1.17"/>
    </reaction>
</comment>
<comment type="subcellular location">
    <subcellularLocation>
        <location evidence="3">Secreted</location>
    </subcellularLocation>
</comment>
<comment type="similarity">
    <text evidence="2">Belongs to the glycosyl hydrolase 22 family.</text>
</comment>
<protein>
    <recommendedName>
        <fullName>Sperm acrosome-associated protein 5</fullName>
        <ecNumber>3.2.1.17</ecNumber>
    </recommendedName>
    <alternativeName>
        <fullName>Lysozyme-like protein 5</fullName>
    </alternativeName>
</protein>
<keyword id="KW-1015">Disulfide bond</keyword>
<keyword id="KW-0326">Glycosidase</keyword>
<keyword id="KW-0378">Hydrolase</keyword>
<keyword id="KW-1185">Reference proteome</keyword>
<keyword id="KW-0964">Secreted</keyword>
<keyword id="KW-0732">Signal</keyword>
<gene>
    <name type="primary">Spaca5</name>
    <name type="synonym">Gm718</name>
    <name type="synonym">Lyzl5</name>
</gene>
<sequence>MKVCSIVVVILAVLLIAKLDAKIYERCELAKKLEEAGLDGFKGYTVGDWLCVAHYESGFDTSFVDHNPDGSSEYGIFQLNSAWWCNNGITPTQNLCNIDCNDLLNRHILDDIICAKRVASSHKSMKAWDSWTQHCAGHDLSEWLKGCSVRLKTDSSYNNW</sequence>
<organism>
    <name type="scientific">Mus musculus</name>
    <name type="common">Mouse</name>
    <dbReference type="NCBI Taxonomy" id="10090"/>
    <lineage>
        <taxon>Eukaryota</taxon>
        <taxon>Metazoa</taxon>
        <taxon>Chordata</taxon>
        <taxon>Craniata</taxon>
        <taxon>Vertebrata</taxon>
        <taxon>Euteleostomi</taxon>
        <taxon>Mammalia</taxon>
        <taxon>Eutheria</taxon>
        <taxon>Euarchontoglires</taxon>
        <taxon>Glires</taxon>
        <taxon>Rodentia</taxon>
        <taxon>Myomorpha</taxon>
        <taxon>Muroidea</taxon>
        <taxon>Muridae</taxon>
        <taxon>Murinae</taxon>
        <taxon>Mus</taxon>
        <taxon>Mus</taxon>
    </lineage>
</organism>
<feature type="signal peptide" evidence="1">
    <location>
        <begin position="1"/>
        <end position="21"/>
    </location>
</feature>
<feature type="chain" id="PRO_0000284471" description="Sperm acrosome-associated protein 5">
    <location>
        <begin position="22"/>
        <end position="160"/>
    </location>
</feature>
<feature type="domain" description="C-type lysozyme" evidence="2">
    <location>
        <begin position="22"/>
        <end position="150"/>
    </location>
</feature>
<feature type="active site" evidence="2">
    <location>
        <position position="56"/>
    </location>
</feature>
<feature type="disulfide bond" evidence="2">
    <location>
        <begin position="27"/>
        <end position="147"/>
    </location>
</feature>
<feature type="disulfide bond" evidence="2">
    <location>
        <begin position="51"/>
        <end position="135"/>
    </location>
</feature>
<feature type="disulfide bond" evidence="2">
    <location>
        <begin position="85"/>
        <end position="100"/>
    </location>
</feature>
<feature type="disulfide bond" evidence="2">
    <location>
        <begin position="96"/>
        <end position="114"/>
    </location>
</feature>
<name>LYZL5_MOUSE</name>
<accession>A2AE20</accession>
<dbReference type="EC" id="3.2.1.17"/>
<dbReference type="EMBL" id="AL671853">
    <property type="status" value="NOT_ANNOTATED_CDS"/>
    <property type="molecule type" value="Genomic_DNA"/>
</dbReference>
<dbReference type="CCDS" id="CCDS40888.1"/>
<dbReference type="RefSeq" id="NP_001078862.1">
    <property type="nucleotide sequence ID" value="NM_001085393.3"/>
</dbReference>
<dbReference type="SMR" id="A2AE20"/>
<dbReference type="FunCoup" id="A2AE20">
    <property type="interactions" value="13"/>
</dbReference>
<dbReference type="STRING" id="10090.ENSMUSP00000048721"/>
<dbReference type="CAZy" id="GH22">
    <property type="family name" value="Glycoside Hydrolase Family 22"/>
</dbReference>
<dbReference type="PhosphoSitePlus" id="A2AE20"/>
<dbReference type="jPOST" id="A2AE20"/>
<dbReference type="PaxDb" id="10090-ENSMUSP00000048721"/>
<dbReference type="PeptideAtlas" id="A2AE20"/>
<dbReference type="ProteomicsDB" id="291981"/>
<dbReference type="Ensembl" id="ENSMUST00000040437.6">
    <property type="protein sequence ID" value="ENSMUSP00000048721.6"/>
    <property type="gene ID" value="ENSMUSG00000037167.6"/>
</dbReference>
<dbReference type="GeneID" id="278203"/>
<dbReference type="KEGG" id="mmu:278203"/>
<dbReference type="UCSC" id="uc009sul.2">
    <property type="organism name" value="mouse"/>
</dbReference>
<dbReference type="AGR" id="MGI:2685564"/>
<dbReference type="CTD" id="389852"/>
<dbReference type="MGI" id="MGI:2685564">
    <property type="gene designation" value="Spaca5"/>
</dbReference>
<dbReference type="VEuPathDB" id="HostDB:ENSMUSG00000037167"/>
<dbReference type="eggNOG" id="ENOG502SUHW">
    <property type="taxonomic scope" value="Eukaryota"/>
</dbReference>
<dbReference type="GeneTree" id="ENSGT00940000162205"/>
<dbReference type="HOGENOM" id="CLU_111620_0_1_1"/>
<dbReference type="InParanoid" id="A2AE20"/>
<dbReference type="OMA" id="AWWCNNG"/>
<dbReference type="OrthoDB" id="17373at2759"/>
<dbReference type="PhylomeDB" id="A2AE20"/>
<dbReference type="TreeFam" id="TF324882"/>
<dbReference type="BioGRID-ORCS" id="278203">
    <property type="hits" value="1 hit in 76 CRISPR screens"/>
</dbReference>
<dbReference type="PRO" id="PR:A2AE20"/>
<dbReference type="Proteomes" id="UP000000589">
    <property type="component" value="Chromosome X"/>
</dbReference>
<dbReference type="RNAct" id="A2AE20">
    <property type="molecule type" value="protein"/>
</dbReference>
<dbReference type="Bgee" id="ENSMUSG00000037167">
    <property type="expression patterns" value="Expressed in spermatid and 7 other cell types or tissues"/>
</dbReference>
<dbReference type="ExpressionAtlas" id="A2AE20">
    <property type="expression patterns" value="baseline and differential"/>
</dbReference>
<dbReference type="GO" id="GO:0005576">
    <property type="term" value="C:extracellular region"/>
    <property type="evidence" value="ECO:0007669"/>
    <property type="project" value="UniProtKB-SubCell"/>
</dbReference>
<dbReference type="GO" id="GO:0003796">
    <property type="term" value="F:lysozyme activity"/>
    <property type="evidence" value="ECO:0007669"/>
    <property type="project" value="UniProtKB-EC"/>
</dbReference>
<dbReference type="CDD" id="cd16897">
    <property type="entry name" value="LYZ_C"/>
    <property type="match status" value="1"/>
</dbReference>
<dbReference type="FunFam" id="1.10.530.10:FF:000001">
    <property type="entry name" value="Lysozyme C"/>
    <property type="match status" value="1"/>
</dbReference>
<dbReference type="Gene3D" id="1.10.530.10">
    <property type="match status" value="1"/>
</dbReference>
<dbReference type="InterPro" id="IPR001916">
    <property type="entry name" value="Glyco_hydro_22"/>
</dbReference>
<dbReference type="InterPro" id="IPR000974">
    <property type="entry name" value="Glyco_hydro_22_lys"/>
</dbReference>
<dbReference type="InterPro" id="IPR023346">
    <property type="entry name" value="Lysozyme-like_dom_sf"/>
</dbReference>
<dbReference type="PANTHER" id="PTHR11407">
    <property type="entry name" value="LYSOZYME C"/>
    <property type="match status" value="1"/>
</dbReference>
<dbReference type="PANTHER" id="PTHR11407:SF31">
    <property type="entry name" value="SPERM ACROSOME-ASSOCIATED PROTEIN 5"/>
    <property type="match status" value="1"/>
</dbReference>
<dbReference type="Pfam" id="PF00062">
    <property type="entry name" value="Lys"/>
    <property type="match status" value="1"/>
</dbReference>
<dbReference type="PRINTS" id="PR00137">
    <property type="entry name" value="LYSOZYME"/>
</dbReference>
<dbReference type="PRINTS" id="PR00135">
    <property type="entry name" value="LYZLACT"/>
</dbReference>
<dbReference type="SMART" id="SM00263">
    <property type="entry name" value="LYZ1"/>
    <property type="match status" value="1"/>
</dbReference>
<dbReference type="SUPFAM" id="SSF53955">
    <property type="entry name" value="Lysozyme-like"/>
    <property type="match status" value="1"/>
</dbReference>
<dbReference type="PROSITE" id="PS51348">
    <property type="entry name" value="GLYCOSYL_HYDROL_F22_2"/>
    <property type="match status" value="1"/>
</dbReference>
<proteinExistence type="evidence at protein level"/>
<reference key="1">
    <citation type="journal article" date="2009" name="PLoS Biol.">
        <title>Lineage-specific biology revealed by a finished genome assembly of the mouse.</title>
        <authorList>
            <person name="Church D.M."/>
            <person name="Goodstadt L."/>
            <person name="Hillier L.W."/>
            <person name="Zody M.C."/>
            <person name="Goldstein S."/>
            <person name="She X."/>
            <person name="Bult C.J."/>
            <person name="Agarwala R."/>
            <person name="Cherry J.L."/>
            <person name="DiCuccio M."/>
            <person name="Hlavina W."/>
            <person name="Kapustin Y."/>
            <person name="Meric P."/>
            <person name="Maglott D."/>
            <person name="Birtle Z."/>
            <person name="Marques A.C."/>
            <person name="Graves T."/>
            <person name="Zhou S."/>
            <person name="Teague B."/>
            <person name="Potamousis K."/>
            <person name="Churas C."/>
            <person name="Place M."/>
            <person name="Herschleb J."/>
            <person name="Runnheim R."/>
            <person name="Forrest D."/>
            <person name="Amos-Landgraf J."/>
            <person name="Schwartz D.C."/>
            <person name="Cheng Z."/>
            <person name="Lindblad-Toh K."/>
            <person name="Eichler E.E."/>
            <person name="Ponting C.P."/>
        </authorList>
    </citation>
    <scope>NUCLEOTIDE SEQUENCE [LARGE SCALE GENOMIC DNA]</scope>
    <source>
        <strain>C57BL/6J</strain>
    </source>
</reference>
<reference key="2">
    <citation type="journal article" date="2010" name="Cell">
        <title>A tissue-specific atlas of mouse protein phosphorylation and expression.</title>
        <authorList>
            <person name="Huttlin E.L."/>
            <person name="Jedrychowski M.P."/>
            <person name="Elias J.E."/>
            <person name="Goswami T."/>
            <person name="Rad R."/>
            <person name="Beausoleil S.A."/>
            <person name="Villen J."/>
            <person name="Haas W."/>
            <person name="Sowa M.E."/>
            <person name="Gygi S.P."/>
        </authorList>
    </citation>
    <scope>IDENTIFICATION BY MASS SPECTROMETRY [LARGE SCALE ANALYSIS]</scope>
    <source>
        <tissue>Testis</tissue>
    </source>
</reference>
<evidence type="ECO:0000255" key="1"/>
<evidence type="ECO:0000255" key="2">
    <source>
        <dbReference type="PROSITE-ProRule" id="PRU00680"/>
    </source>
</evidence>
<evidence type="ECO:0000305" key="3"/>